<evidence type="ECO:0000255" key="1">
    <source>
        <dbReference type="HAMAP-Rule" id="MF_00285"/>
    </source>
</evidence>
<evidence type="ECO:0000256" key="2">
    <source>
        <dbReference type="SAM" id="MobiDB-lite"/>
    </source>
</evidence>
<proteinExistence type="inferred from homology"/>
<dbReference type="EC" id="7.2.2.6" evidence="1"/>
<dbReference type="EMBL" id="BA000019">
    <property type="protein sequence ID" value="BAB74852.1"/>
    <property type="molecule type" value="Genomic_DNA"/>
</dbReference>
<dbReference type="PIR" id="AB2200">
    <property type="entry name" value="AB2200"/>
</dbReference>
<dbReference type="SMR" id="Q8YSD5"/>
<dbReference type="STRING" id="103690.gene:10495190"/>
<dbReference type="KEGG" id="ana:all3153"/>
<dbReference type="eggNOG" id="COG2216">
    <property type="taxonomic scope" value="Bacteria"/>
</dbReference>
<dbReference type="OrthoDB" id="438550at2"/>
<dbReference type="Proteomes" id="UP000002483">
    <property type="component" value="Chromosome"/>
</dbReference>
<dbReference type="GO" id="GO:0005886">
    <property type="term" value="C:plasma membrane"/>
    <property type="evidence" value="ECO:0007669"/>
    <property type="project" value="UniProtKB-SubCell"/>
</dbReference>
<dbReference type="GO" id="GO:0005524">
    <property type="term" value="F:ATP binding"/>
    <property type="evidence" value="ECO:0007669"/>
    <property type="project" value="UniProtKB-UniRule"/>
</dbReference>
<dbReference type="GO" id="GO:0016887">
    <property type="term" value="F:ATP hydrolysis activity"/>
    <property type="evidence" value="ECO:0007669"/>
    <property type="project" value="InterPro"/>
</dbReference>
<dbReference type="GO" id="GO:0000287">
    <property type="term" value="F:magnesium ion binding"/>
    <property type="evidence" value="ECO:0007669"/>
    <property type="project" value="UniProtKB-UniRule"/>
</dbReference>
<dbReference type="GO" id="GO:0008556">
    <property type="term" value="F:P-type potassium transmembrane transporter activity"/>
    <property type="evidence" value="ECO:0007669"/>
    <property type="project" value="UniProtKB-UniRule"/>
</dbReference>
<dbReference type="CDD" id="cd02078">
    <property type="entry name" value="P-type_ATPase_K"/>
    <property type="match status" value="1"/>
</dbReference>
<dbReference type="FunFam" id="3.40.1110.10:FF:000007">
    <property type="entry name" value="Potassium-transporting ATPase ATP-binding subunit"/>
    <property type="match status" value="1"/>
</dbReference>
<dbReference type="Gene3D" id="3.40.1110.10">
    <property type="entry name" value="Calcium-transporting ATPase, cytoplasmic domain N"/>
    <property type="match status" value="1"/>
</dbReference>
<dbReference type="Gene3D" id="2.70.150.10">
    <property type="entry name" value="Calcium-transporting ATPase, cytoplasmic transduction domain A"/>
    <property type="match status" value="1"/>
</dbReference>
<dbReference type="Gene3D" id="3.40.50.1000">
    <property type="entry name" value="HAD superfamily/HAD-like"/>
    <property type="match status" value="1"/>
</dbReference>
<dbReference type="HAMAP" id="MF_00285">
    <property type="entry name" value="KdpB"/>
    <property type="match status" value="1"/>
</dbReference>
<dbReference type="InterPro" id="IPR023299">
    <property type="entry name" value="ATPase_P-typ_cyto_dom_N"/>
</dbReference>
<dbReference type="InterPro" id="IPR018303">
    <property type="entry name" value="ATPase_P-typ_P_site"/>
</dbReference>
<dbReference type="InterPro" id="IPR023298">
    <property type="entry name" value="ATPase_P-typ_TM_dom_sf"/>
</dbReference>
<dbReference type="InterPro" id="IPR008250">
    <property type="entry name" value="ATPase_P-typ_transduc_dom_A_sf"/>
</dbReference>
<dbReference type="InterPro" id="IPR036412">
    <property type="entry name" value="HAD-like_sf"/>
</dbReference>
<dbReference type="InterPro" id="IPR023214">
    <property type="entry name" value="HAD_sf"/>
</dbReference>
<dbReference type="InterPro" id="IPR006391">
    <property type="entry name" value="P-type_ATPase_bsu_IA"/>
</dbReference>
<dbReference type="InterPro" id="IPR001757">
    <property type="entry name" value="P_typ_ATPase"/>
</dbReference>
<dbReference type="InterPro" id="IPR044492">
    <property type="entry name" value="P_typ_ATPase_HD_dom"/>
</dbReference>
<dbReference type="NCBIfam" id="TIGR01494">
    <property type="entry name" value="ATPase_P-type"/>
    <property type="match status" value="2"/>
</dbReference>
<dbReference type="NCBIfam" id="TIGR01497">
    <property type="entry name" value="kdpB"/>
    <property type="match status" value="1"/>
</dbReference>
<dbReference type="PANTHER" id="PTHR43743">
    <property type="entry name" value="POTASSIUM-TRANSPORTING ATPASE ATP-BINDING SUBUNIT"/>
    <property type="match status" value="1"/>
</dbReference>
<dbReference type="PANTHER" id="PTHR43743:SF1">
    <property type="entry name" value="POTASSIUM-TRANSPORTING ATPASE ATP-BINDING SUBUNIT"/>
    <property type="match status" value="1"/>
</dbReference>
<dbReference type="Pfam" id="PF00122">
    <property type="entry name" value="E1-E2_ATPase"/>
    <property type="match status" value="1"/>
</dbReference>
<dbReference type="Pfam" id="PF00702">
    <property type="entry name" value="Hydrolase"/>
    <property type="match status" value="1"/>
</dbReference>
<dbReference type="PRINTS" id="PR00119">
    <property type="entry name" value="CATATPASE"/>
</dbReference>
<dbReference type="PRINTS" id="PR00120">
    <property type="entry name" value="HATPASE"/>
</dbReference>
<dbReference type="SFLD" id="SFLDG00002">
    <property type="entry name" value="C1.7:_P-type_atpase_like"/>
    <property type="match status" value="1"/>
</dbReference>
<dbReference type="SFLD" id="SFLDF00027">
    <property type="entry name" value="p-type_atpase"/>
    <property type="match status" value="1"/>
</dbReference>
<dbReference type="SUPFAM" id="SSF81653">
    <property type="entry name" value="Calcium ATPase, transduction domain A"/>
    <property type="match status" value="1"/>
</dbReference>
<dbReference type="SUPFAM" id="SSF81665">
    <property type="entry name" value="Calcium ATPase, transmembrane domain M"/>
    <property type="match status" value="1"/>
</dbReference>
<dbReference type="SUPFAM" id="SSF56784">
    <property type="entry name" value="HAD-like"/>
    <property type="match status" value="1"/>
</dbReference>
<dbReference type="PROSITE" id="PS00154">
    <property type="entry name" value="ATPASE_E1_E2"/>
    <property type="match status" value="1"/>
</dbReference>
<name>KDPB2_NOSS1</name>
<sequence length="708" mass="75488">MRSPSRLPHETRDSRQRTPKTDMRGLYQRAIKESFVKLHPKIAVRNPVMFIVWVGTIVTFLVTLNPNLFGTVQANINQQRLLNGLITLILFFTVLFANFAEAVAEGRGKAQADSLKATRSDTIAWKVLPNGSLEKIGSTQLRRGDVIKVVANDMIPGDGEVIQGIGSVDESAITGESAPVLKQPGTDIASSVTGGTRLLSDELIIRITADPGQGFIDRMISLVEGAERSKTPNEIALTVLLAVLTQVFLIVVATMPSFVNYIANFISTAFGAEAANSLRAGASIAILISLLVALIPTTIGGLLSAIGIAGMDRVAQFNVIATSGRAVEACGDINSLVLDKTGTITFGNRMADEFIPVNSYTVEDVARIAKLASLFDETPEGKSIVKLAEKYKILADVNLNQAEGVEFSAKTRMSGTNLPNGKQVRKGAVDAIKGFIRSRGGSIPSDVDVAYERVSLLGGTPLAVCQDNEIFGVIYLKDIVKSGLRERFEQLRRMGVKTIMLTGDNHITASVIAQEAGVDDFIAEATPEDKIDVIRNEQSQGKLVAMTGDGTNDAPALAQANVGLAMNSGTQAAKEAANMVDLDSDPTKLIDLVTIGKQLLITRGALTTFSIANDIAKYFAILPTIFGAAGIGALNIMGLKSAQSAIISALIYNALIIPALIPLALQGVKFRSLTADQLLRRNIFIYGLGGIIAPFIAIKLIDVILPFS</sequence>
<comment type="function">
    <text evidence="1">Part of the high-affinity ATP-driven potassium transport (or Kdp) system, which catalyzes the hydrolysis of ATP coupled with the electrogenic transport of potassium into the cytoplasm. This subunit is responsible for energy coupling to the transport system and for the release of the potassium ions to the cytoplasm.</text>
</comment>
<comment type="catalytic activity">
    <reaction evidence="1">
        <text>K(+)(out) + ATP + H2O = K(+)(in) + ADP + phosphate + H(+)</text>
        <dbReference type="Rhea" id="RHEA:16777"/>
        <dbReference type="ChEBI" id="CHEBI:15377"/>
        <dbReference type="ChEBI" id="CHEBI:15378"/>
        <dbReference type="ChEBI" id="CHEBI:29103"/>
        <dbReference type="ChEBI" id="CHEBI:30616"/>
        <dbReference type="ChEBI" id="CHEBI:43474"/>
        <dbReference type="ChEBI" id="CHEBI:456216"/>
        <dbReference type="EC" id="7.2.2.6"/>
    </reaction>
    <physiologicalReaction direction="left-to-right" evidence="1">
        <dbReference type="Rhea" id="RHEA:16778"/>
    </physiologicalReaction>
</comment>
<comment type="subunit">
    <text evidence="1">The system is composed of three essential subunits: KdpA, KdpB and KdpC.</text>
</comment>
<comment type="subcellular location">
    <subcellularLocation>
        <location evidence="1">Cell inner membrane</location>
        <topology evidence="1">Multi-pass membrane protein</topology>
    </subcellularLocation>
</comment>
<comment type="similarity">
    <text evidence="1">Belongs to the cation transport ATPase (P-type) (TC 3.A.3) family. Type IA subfamily.</text>
</comment>
<accession>Q8YSD5</accession>
<protein>
    <recommendedName>
        <fullName evidence="1">Potassium-transporting ATPase ATP-binding subunit 2</fullName>
        <ecNumber evidence="1">7.2.2.6</ecNumber>
    </recommendedName>
    <alternativeName>
        <fullName evidence="1">ATP phosphohydrolase [potassium-transporting] B chain 2</fullName>
    </alternativeName>
    <alternativeName>
        <fullName evidence="1">Potassium-binding and translocating subunit B 2</fullName>
    </alternativeName>
    <alternativeName>
        <fullName evidence="1">Potassium-translocating ATPase B chain 2</fullName>
    </alternativeName>
</protein>
<reference key="1">
    <citation type="journal article" date="2001" name="DNA Res.">
        <title>Complete genomic sequence of the filamentous nitrogen-fixing cyanobacterium Anabaena sp. strain PCC 7120.</title>
        <authorList>
            <person name="Kaneko T."/>
            <person name="Nakamura Y."/>
            <person name="Wolk C.P."/>
            <person name="Kuritz T."/>
            <person name="Sasamoto S."/>
            <person name="Watanabe A."/>
            <person name="Iriguchi M."/>
            <person name="Ishikawa A."/>
            <person name="Kawashima K."/>
            <person name="Kimura T."/>
            <person name="Kishida Y."/>
            <person name="Kohara M."/>
            <person name="Matsumoto M."/>
            <person name="Matsuno A."/>
            <person name="Muraki A."/>
            <person name="Nakazaki N."/>
            <person name="Shimpo S."/>
            <person name="Sugimoto M."/>
            <person name="Takazawa M."/>
            <person name="Yamada M."/>
            <person name="Yasuda M."/>
            <person name="Tabata S."/>
        </authorList>
    </citation>
    <scope>NUCLEOTIDE SEQUENCE [LARGE SCALE GENOMIC DNA]</scope>
    <source>
        <strain>PCC 7120 / SAG 25.82 / UTEX 2576</strain>
    </source>
</reference>
<keyword id="KW-0067">ATP-binding</keyword>
<keyword id="KW-0997">Cell inner membrane</keyword>
<keyword id="KW-1003">Cell membrane</keyword>
<keyword id="KW-0406">Ion transport</keyword>
<keyword id="KW-0460">Magnesium</keyword>
<keyword id="KW-0472">Membrane</keyword>
<keyword id="KW-0479">Metal-binding</keyword>
<keyword id="KW-0547">Nucleotide-binding</keyword>
<keyword id="KW-0597">Phosphoprotein</keyword>
<keyword id="KW-0630">Potassium</keyword>
<keyword id="KW-0633">Potassium transport</keyword>
<keyword id="KW-1185">Reference proteome</keyword>
<keyword id="KW-1278">Translocase</keyword>
<keyword id="KW-0812">Transmembrane</keyword>
<keyword id="KW-1133">Transmembrane helix</keyword>
<keyword id="KW-0813">Transport</keyword>
<organism>
    <name type="scientific">Nostoc sp. (strain PCC 7120 / SAG 25.82 / UTEX 2576)</name>
    <dbReference type="NCBI Taxonomy" id="103690"/>
    <lineage>
        <taxon>Bacteria</taxon>
        <taxon>Bacillati</taxon>
        <taxon>Cyanobacteriota</taxon>
        <taxon>Cyanophyceae</taxon>
        <taxon>Nostocales</taxon>
        <taxon>Nostocaceae</taxon>
        <taxon>Nostoc</taxon>
    </lineage>
</organism>
<feature type="chain" id="PRO_0000046111" description="Potassium-transporting ATPase ATP-binding subunit 2">
    <location>
        <begin position="1"/>
        <end position="708"/>
    </location>
</feature>
<feature type="transmembrane region" description="Helical" evidence="1">
    <location>
        <begin position="49"/>
        <end position="69"/>
    </location>
</feature>
<feature type="transmembrane region" description="Helical" evidence="1">
    <location>
        <begin position="84"/>
        <end position="104"/>
    </location>
</feature>
<feature type="transmembrane region" description="Helical" evidence="1">
    <location>
        <begin position="235"/>
        <end position="255"/>
    </location>
</feature>
<feature type="transmembrane region" description="Helical" evidence="1">
    <location>
        <begin position="283"/>
        <end position="303"/>
    </location>
</feature>
<feature type="transmembrane region" description="Helical" evidence="1">
    <location>
        <begin position="619"/>
        <end position="639"/>
    </location>
</feature>
<feature type="transmembrane region" description="Helical" evidence="1">
    <location>
        <begin position="645"/>
        <end position="665"/>
    </location>
</feature>
<feature type="transmembrane region" description="Helical" evidence="1">
    <location>
        <begin position="683"/>
        <end position="703"/>
    </location>
</feature>
<feature type="region of interest" description="Disordered" evidence="2">
    <location>
        <begin position="1"/>
        <end position="23"/>
    </location>
</feature>
<feature type="compositionally biased region" description="Basic and acidic residues" evidence="2">
    <location>
        <begin position="7"/>
        <end position="23"/>
    </location>
</feature>
<feature type="active site" description="4-aspartylphosphate intermediate" evidence="1">
    <location>
        <position position="339"/>
    </location>
</feature>
<feature type="binding site" evidence="1">
    <location>
        <position position="376"/>
    </location>
    <ligand>
        <name>ATP</name>
        <dbReference type="ChEBI" id="CHEBI:30616"/>
    </ligand>
</feature>
<feature type="binding site" evidence="1">
    <location>
        <position position="380"/>
    </location>
    <ligand>
        <name>ATP</name>
        <dbReference type="ChEBI" id="CHEBI:30616"/>
    </ligand>
</feature>
<feature type="binding site" evidence="1">
    <location>
        <begin position="407"/>
        <end position="414"/>
    </location>
    <ligand>
        <name>ATP</name>
        <dbReference type="ChEBI" id="CHEBI:30616"/>
    </ligand>
</feature>
<feature type="binding site" evidence="1">
    <location>
        <position position="426"/>
    </location>
    <ligand>
        <name>ATP</name>
        <dbReference type="ChEBI" id="CHEBI:30616"/>
    </ligand>
</feature>
<feature type="binding site" evidence="1">
    <location>
        <position position="549"/>
    </location>
    <ligand>
        <name>Mg(2+)</name>
        <dbReference type="ChEBI" id="CHEBI:18420"/>
    </ligand>
</feature>
<feature type="binding site" evidence="1">
    <location>
        <position position="553"/>
    </location>
    <ligand>
        <name>Mg(2+)</name>
        <dbReference type="ChEBI" id="CHEBI:18420"/>
    </ligand>
</feature>
<gene>
    <name evidence="1" type="primary">kdpB2</name>
    <name type="ordered locus">all3153</name>
</gene>